<evidence type="ECO:0000256" key="1">
    <source>
        <dbReference type="SAM" id="MobiDB-lite"/>
    </source>
</evidence>
<evidence type="ECO:0000312" key="2">
    <source>
        <dbReference type="HGNC" id="HGNC:30724"/>
    </source>
</evidence>
<reference key="1">
    <citation type="journal article" date="2004" name="Nat. Genet.">
        <title>Complete sequencing and characterization of 21,243 full-length human cDNAs.</title>
        <authorList>
            <person name="Ota T."/>
            <person name="Suzuki Y."/>
            <person name="Nishikawa T."/>
            <person name="Otsuki T."/>
            <person name="Sugiyama T."/>
            <person name="Irie R."/>
            <person name="Wakamatsu A."/>
            <person name="Hayashi K."/>
            <person name="Sato H."/>
            <person name="Nagai K."/>
            <person name="Kimura K."/>
            <person name="Makita H."/>
            <person name="Sekine M."/>
            <person name="Obayashi M."/>
            <person name="Nishi T."/>
            <person name="Shibahara T."/>
            <person name="Tanaka T."/>
            <person name="Ishii S."/>
            <person name="Yamamoto J."/>
            <person name="Saito K."/>
            <person name="Kawai Y."/>
            <person name="Isono Y."/>
            <person name="Nakamura Y."/>
            <person name="Nagahari K."/>
            <person name="Murakami K."/>
            <person name="Yasuda T."/>
            <person name="Iwayanagi T."/>
            <person name="Wagatsuma M."/>
            <person name="Shiratori A."/>
            <person name="Sudo H."/>
            <person name="Hosoiri T."/>
            <person name="Kaku Y."/>
            <person name="Kodaira H."/>
            <person name="Kondo H."/>
            <person name="Sugawara M."/>
            <person name="Takahashi M."/>
            <person name="Kanda K."/>
            <person name="Yokoi T."/>
            <person name="Furuya T."/>
            <person name="Kikkawa E."/>
            <person name="Omura Y."/>
            <person name="Abe K."/>
            <person name="Kamihara K."/>
            <person name="Katsuta N."/>
            <person name="Sato K."/>
            <person name="Tanikawa M."/>
            <person name="Yamazaki M."/>
            <person name="Ninomiya K."/>
            <person name="Ishibashi T."/>
            <person name="Yamashita H."/>
            <person name="Murakawa K."/>
            <person name="Fujimori K."/>
            <person name="Tanai H."/>
            <person name="Kimata M."/>
            <person name="Watanabe M."/>
            <person name="Hiraoka S."/>
            <person name="Chiba Y."/>
            <person name="Ishida S."/>
            <person name="Ono Y."/>
            <person name="Takiguchi S."/>
            <person name="Watanabe S."/>
            <person name="Yosida M."/>
            <person name="Hotuta T."/>
            <person name="Kusano J."/>
            <person name="Kanehori K."/>
            <person name="Takahashi-Fujii A."/>
            <person name="Hara H."/>
            <person name="Tanase T.-O."/>
            <person name="Nomura Y."/>
            <person name="Togiya S."/>
            <person name="Komai F."/>
            <person name="Hara R."/>
            <person name="Takeuchi K."/>
            <person name="Arita M."/>
            <person name="Imose N."/>
            <person name="Musashino K."/>
            <person name="Yuuki H."/>
            <person name="Oshima A."/>
            <person name="Sasaki N."/>
            <person name="Aotsuka S."/>
            <person name="Yoshikawa Y."/>
            <person name="Matsunawa H."/>
            <person name="Ichihara T."/>
            <person name="Shiohata N."/>
            <person name="Sano S."/>
            <person name="Moriya S."/>
            <person name="Momiyama H."/>
            <person name="Satoh N."/>
            <person name="Takami S."/>
            <person name="Terashima Y."/>
            <person name="Suzuki O."/>
            <person name="Nakagawa S."/>
            <person name="Senoh A."/>
            <person name="Mizoguchi H."/>
            <person name="Goto Y."/>
            <person name="Shimizu F."/>
            <person name="Wakebe H."/>
            <person name="Hishigaki H."/>
            <person name="Watanabe T."/>
            <person name="Sugiyama A."/>
            <person name="Takemoto M."/>
            <person name="Kawakami B."/>
            <person name="Yamazaki M."/>
            <person name="Watanabe K."/>
            <person name="Kumagai A."/>
            <person name="Itakura S."/>
            <person name="Fukuzumi Y."/>
            <person name="Fujimori Y."/>
            <person name="Komiyama M."/>
            <person name="Tashiro H."/>
            <person name="Tanigami A."/>
            <person name="Fujiwara T."/>
            <person name="Ono T."/>
            <person name="Yamada K."/>
            <person name="Fujii Y."/>
            <person name="Ozaki K."/>
            <person name="Hirao M."/>
            <person name="Ohmori Y."/>
            <person name="Kawabata A."/>
            <person name="Hikiji T."/>
            <person name="Kobatake N."/>
            <person name="Inagaki H."/>
            <person name="Ikema Y."/>
            <person name="Okamoto S."/>
            <person name="Okitani R."/>
            <person name="Kawakami T."/>
            <person name="Noguchi S."/>
            <person name="Itoh T."/>
            <person name="Shigeta K."/>
            <person name="Senba T."/>
            <person name="Matsumura K."/>
            <person name="Nakajima Y."/>
            <person name="Mizuno T."/>
            <person name="Morinaga M."/>
            <person name="Sasaki M."/>
            <person name="Togashi T."/>
            <person name="Oyama M."/>
            <person name="Hata H."/>
            <person name="Watanabe M."/>
            <person name="Komatsu T."/>
            <person name="Mizushima-Sugano J."/>
            <person name="Satoh T."/>
            <person name="Shirai Y."/>
            <person name="Takahashi Y."/>
            <person name="Nakagawa K."/>
            <person name="Okumura K."/>
            <person name="Nagase T."/>
            <person name="Nomura N."/>
            <person name="Kikuchi H."/>
            <person name="Masuho Y."/>
            <person name="Yamashita R."/>
            <person name="Nakai K."/>
            <person name="Yada T."/>
            <person name="Nakamura Y."/>
            <person name="Ohara O."/>
            <person name="Isogai T."/>
            <person name="Sugano S."/>
        </authorList>
    </citation>
    <scope>NUCLEOTIDE SEQUENCE [LARGE SCALE MRNA]</scope>
    <source>
        <tissue>Kidney</tissue>
    </source>
</reference>
<reference key="2">
    <citation type="journal article" date="2004" name="Nature">
        <title>The DNA sequence and comparative analysis of human chromosome 10.</title>
        <authorList>
            <person name="Deloukas P."/>
            <person name="Earthrowl M.E."/>
            <person name="Grafham D.V."/>
            <person name="Rubenfield M."/>
            <person name="French L."/>
            <person name="Steward C.A."/>
            <person name="Sims S.K."/>
            <person name="Jones M.C."/>
            <person name="Searle S."/>
            <person name="Scott C."/>
            <person name="Howe K."/>
            <person name="Hunt S.E."/>
            <person name="Andrews T.D."/>
            <person name="Gilbert J.G.R."/>
            <person name="Swarbreck D."/>
            <person name="Ashurst J.L."/>
            <person name="Taylor A."/>
            <person name="Battles J."/>
            <person name="Bird C.P."/>
            <person name="Ainscough R."/>
            <person name="Almeida J.P."/>
            <person name="Ashwell R.I.S."/>
            <person name="Ambrose K.D."/>
            <person name="Babbage A.K."/>
            <person name="Bagguley C.L."/>
            <person name="Bailey J."/>
            <person name="Banerjee R."/>
            <person name="Bates K."/>
            <person name="Beasley H."/>
            <person name="Bray-Allen S."/>
            <person name="Brown A.J."/>
            <person name="Brown J.Y."/>
            <person name="Burford D.C."/>
            <person name="Burrill W."/>
            <person name="Burton J."/>
            <person name="Cahill P."/>
            <person name="Camire D."/>
            <person name="Carter N.P."/>
            <person name="Chapman J.C."/>
            <person name="Clark S.Y."/>
            <person name="Clarke G."/>
            <person name="Clee C.M."/>
            <person name="Clegg S."/>
            <person name="Corby N."/>
            <person name="Coulson A."/>
            <person name="Dhami P."/>
            <person name="Dutta I."/>
            <person name="Dunn M."/>
            <person name="Faulkner L."/>
            <person name="Frankish A."/>
            <person name="Frankland J.A."/>
            <person name="Garner P."/>
            <person name="Garnett J."/>
            <person name="Gribble S."/>
            <person name="Griffiths C."/>
            <person name="Grocock R."/>
            <person name="Gustafson E."/>
            <person name="Hammond S."/>
            <person name="Harley J.L."/>
            <person name="Hart E."/>
            <person name="Heath P.D."/>
            <person name="Ho T.P."/>
            <person name="Hopkins B."/>
            <person name="Horne J."/>
            <person name="Howden P.J."/>
            <person name="Huckle E."/>
            <person name="Hynds C."/>
            <person name="Johnson C."/>
            <person name="Johnson D."/>
            <person name="Kana A."/>
            <person name="Kay M."/>
            <person name="Kimberley A.M."/>
            <person name="Kershaw J.K."/>
            <person name="Kokkinaki M."/>
            <person name="Laird G.K."/>
            <person name="Lawlor S."/>
            <person name="Lee H.M."/>
            <person name="Leongamornlert D.A."/>
            <person name="Laird G."/>
            <person name="Lloyd C."/>
            <person name="Lloyd D.M."/>
            <person name="Loveland J."/>
            <person name="Lovell J."/>
            <person name="McLaren S."/>
            <person name="McLay K.E."/>
            <person name="McMurray A."/>
            <person name="Mashreghi-Mohammadi M."/>
            <person name="Matthews L."/>
            <person name="Milne S."/>
            <person name="Nickerson T."/>
            <person name="Nguyen M."/>
            <person name="Overton-Larty E."/>
            <person name="Palmer S.A."/>
            <person name="Pearce A.V."/>
            <person name="Peck A.I."/>
            <person name="Pelan S."/>
            <person name="Phillimore B."/>
            <person name="Porter K."/>
            <person name="Rice C.M."/>
            <person name="Rogosin A."/>
            <person name="Ross M.T."/>
            <person name="Sarafidou T."/>
            <person name="Sehra H.K."/>
            <person name="Shownkeen R."/>
            <person name="Skuce C.D."/>
            <person name="Smith M."/>
            <person name="Standring L."/>
            <person name="Sycamore N."/>
            <person name="Tester J."/>
            <person name="Thorpe A."/>
            <person name="Torcasso W."/>
            <person name="Tracey A."/>
            <person name="Tromans A."/>
            <person name="Tsolas J."/>
            <person name="Wall M."/>
            <person name="Walsh J."/>
            <person name="Wang H."/>
            <person name="Weinstock K."/>
            <person name="West A.P."/>
            <person name="Willey D.L."/>
            <person name="Whitehead S.L."/>
            <person name="Wilming L."/>
            <person name="Wray P.W."/>
            <person name="Young L."/>
            <person name="Chen Y."/>
            <person name="Lovering R.C."/>
            <person name="Moschonas N.K."/>
            <person name="Siebert R."/>
            <person name="Fechtel K."/>
            <person name="Bentley D."/>
            <person name="Durbin R.M."/>
            <person name="Hubbard T."/>
            <person name="Doucette-Stamm L."/>
            <person name="Beck S."/>
            <person name="Smith D.R."/>
            <person name="Rogers J."/>
        </authorList>
    </citation>
    <scope>NUCLEOTIDE SEQUENCE [LARGE SCALE GENOMIC DNA]</scope>
</reference>
<dbReference type="EMBL" id="AK096000">
    <property type="protein sequence ID" value="BAC04668.1"/>
    <property type="molecule type" value="mRNA"/>
</dbReference>
<dbReference type="EMBL" id="AL358216">
    <property type="status" value="NOT_ANNOTATED_CDS"/>
    <property type="molecule type" value="Genomic_DNA"/>
</dbReference>
<dbReference type="FunCoup" id="Q8N8Z3">
    <property type="interactions" value="1"/>
</dbReference>
<dbReference type="STRING" id="9606.ENSP00000498998"/>
<dbReference type="GlyGen" id="Q8N8Z3">
    <property type="glycosylation" value="1 site"/>
</dbReference>
<dbReference type="iPTMnet" id="Q8N8Z3"/>
<dbReference type="PhosphoSitePlus" id="Q8N8Z3"/>
<dbReference type="BioMuta" id="PRR26"/>
<dbReference type="DMDM" id="74751113"/>
<dbReference type="MassIVE" id="Q8N8Z3"/>
<dbReference type="PaxDb" id="9606-ENSP00000414034"/>
<dbReference type="PeptideAtlas" id="Q8N8Z3"/>
<dbReference type="UCSC" id="uc057rea.1">
    <property type="organism name" value="human"/>
</dbReference>
<dbReference type="AGR" id="HGNC:30724"/>
<dbReference type="GeneCards" id="DIP2C-AS1"/>
<dbReference type="HGNC" id="HGNC:30724">
    <property type="gene designation" value="DIP2C-AS1"/>
</dbReference>
<dbReference type="neXtProt" id="NX_Q8N8Z3"/>
<dbReference type="eggNOG" id="ENOG502TEDK">
    <property type="taxonomic scope" value="Eukaryota"/>
</dbReference>
<dbReference type="HOGENOM" id="CLU_1250320_0_0_1"/>
<dbReference type="InParanoid" id="Q8N8Z3"/>
<dbReference type="PAN-GO" id="Q8N8Z3">
    <property type="GO annotations" value="0 GO annotations based on evolutionary models"/>
</dbReference>
<dbReference type="PhylomeDB" id="Q8N8Z3"/>
<dbReference type="PathwayCommons" id="Q8N8Z3"/>
<dbReference type="SignaLink" id="Q8N8Z3"/>
<dbReference type="ChiTaRS" id="PRR26">
    <property type="organism name" value="human"/>
</dbReference>
<dbReference type="Pharos" id="Q8N8Z3">
    <property type="development level" value="Tdark"/>
</dbReference>
<dbReference type="PRO" id="PR:Q8N8Z3"/>
<dbReference type="Proteomes" id="UP000005640">
    <property type="component" value="Unplaced"/>
</dbReference>
<dbReference type="RNAct" id="Q8N8Z3">
    <property type="molecule type" value="protein"/>
</dbReference>
<feature type="chain" id="PRO_0000247125" description="Putative uncharacterized protein DIP2C-AS1">
    <location>
        <begin position="1"/>
        <end position="221"/>
    </location>
</feature>
<feature type="region of interest" description="Disordered" evidence="1">
    <location>
        <begin position="1"/>
        <end position="64"/>
    </location>
</feature>
<feature type="compositionally biased region" description="Basic and acidic residues" evidence="1">
    <location>
        <begin position="1"/>
        <end position="16"/>
    </location>
</feature>
<name>PRR26_HUMAN</name>
<accession>Q8N8Z3</accession>
<gene>
    <name evidence="2" type="primary">DIP2C-AS1</name>
    <name type="synonym">C10orf108</name>
    <name type="synonym">PRR26</name>
</gene>
<keyword id="KW-1185">Reference proteome</keyword>
<proteinExistence type="evidence at transcript level"/>
<protein>
    <recommendedName>
        <fullName>Putative uncharacterized protein DIP2C-AS1</fullName>
    </recommendedName>
    <alternativeName>
        <fullName evidence="2">DIP2C antisense RNA 1</fullName>
    </alternativeName>
    <alternativeName>
        <fullName>Proline-rich protein 26</fullName>
    </alternativeName>
</protein>
<organism>
    <name type="scientific">Homo sapiens</name>
    <name type="common">Human</name>
    <dbReference type="NCBI Taxonomy" id="9606"/>
    <lineage>
        <taxon>Eukaryota</taxon>
        <taxon>Metazoa</taxon>
        <taxon>Chordata</taxon>
        <taxon>Craniata</taxon>
        <taxon>Vertebrata</taxon>
        <taxon>Euteleostomi</taxon>
        <taxon>Mammalia</taxon>
        <taxon>Eutheria</taxon>
        <taxon>Euarchontoglires</taxon>
        <taxon>Primates</taxon>
        <taxon>Haplorrhini</taxon>
        <taxon>Catarrhini</taxon>
        <taxon>Hominidae</taxon>
        <taxon>Homo</taxon>
    </lineage>
</organism>
<sequence length="221" mass="24207">MESSRWDKDPPGERRPQQSQHWRARDHGARGCGPRQPTATASPRPGLWITPAHGSHTPQTNTRRTQADNIFIYESWLIHHGTQMSSVLPQPPLVRGPWHNTNSPWDSWASRGKLRVCPCRTPRLHSSGCFSSKAGTALSPSLPVPGLRPQPPFLQKPLSILAPATPPALVSPTPPKLSPGQLSPHSVNVHWGPQGHLHLPRSGTTVLHAYLQTLSSPASHQ</sequence>